<sequence>MTWIPLHCHSQYSILDATCSIKKFVAKAVEYQIPALALTDHGNLFGAVEFYKTCKQNAIKPIIGCELYVAPSSRFDKKKERKSRVANHLILLCKDEEGYRNLCLLSSLAYTEGFYYVPRIDRDLLSQHSKGLICLSACLSGSVAQAALESEEDLEKDLLWYQDLFQEDFFSEVQLHKSSEEKVALFEETWLKQNYYQFIEKQLKVNEAVLATSKRLGIPSVATNDIHYLNPDDWLAHEILLNVQSREPIRTAKQNTYIPNPKRKTYPSREFYFKSPQEIAELFAAHPETITNTCIVAERCHLELDFETKHYPIYVPEALQKKGSYTEEERYKASSAFLEELCEQGLTSKYTPELLGHIAKKFPGEDPLTLVKERLKLESSIIISKGMCDYLLIVWDIINWAKDHGIPVGPGRGSGAGSVMLFLLGITEIEPIRFDLFFERFINPERISYPDIDIDICMIGRERVINYAIERHGKDNVAQIITFGTMKAKMAIKDVGRTLDTPLAKVNFIAKHIPDLNATITSALEADPELRQLYVDDAEAAEVIDMAKKLEGSIRNTGVHAAGVIICGDPLTNHIPICVPKDSSMISTQYSMKPVESVGMLKVDFLGLKTLTGIHIATQAIYKKTGILLRAATIPLDDQNTFSLLHQGKTMGIFQMESRGMQDLAKNLRPDAFEEIIAIGALYRPGPMDMIPSFINRKHGKENIEYDHPLMEPILKETFGIMVYQEQVMQIAGSLAKYSLGEGDVLRRAMGKKDHEQMVKEREKFCSRAAANGIDPSIATTIFDKMEKFASYGFNKSHAAAYGLITYTTAYLKANYPKEWLAALLTCDYDDIEKVGKLIQEAHSMNILVLPPDINESGQDFEATQKGIRFSLGAVKGVGMSIVDSIVEEREKNGPYKSLQDFVQRADFKKVTKKQLENLVDAGTFDCFEPNKDLALAILNDLYDTFSREKKEAATGVLTFFSLDSMARDPVKITVSPENVIQRSPKELLKREKELLGVYLTAHPMDAVEHMLPFLSVVPARDFEGLPHGTIIRTVFLIDKVTTKISSAEQKKFALLQVSDEVDSYELPIWADMYAEYRDLLEEDRLIYAILAIDRRSDSLRLSCRWMRDLSTVNDSVIAECDEVYDRLKSQKVYSSTKKSTGAQSSAMIKKVETREISPVTISLDLNKLRHSHLFILKGLIRKYSGSQALSLVFTKDNQRFASISPDADFFVTDDISSLLQEIEATNIPARVLATTV</sequence>
<proteinExistence type="inferred from homology"/>
<reference key="1">
    <citation type="journal article" date="1998" name="Science">
        <title>Genome sequence of an obligate intracellular pathogen of humans: Chlamydia trachomatis.</title>
        <authorList>
            <person name="Stephens R.S."/>
            <person name="Kalman S."/>
            <person name="Lammel C.J."/>
            <person name="Fan J."/>
            <person name="Marathe R."/>
            <person name="Aravind L."/>
            <person name="Mitchell W.P."/>
            <person name="Olinger L."/>
            <person name="Tatusov R.L."/>
            <person name="Zhao Q."/>
            <person name="Koonin E.V."/>
            <person name="Davis R.W."/>
        </authorList>
    </citation>
    <scope>NUCLEOTIDE SEQUENCE [LARGE SCALE GENOMIC DNA]</scope>
    <source>
        <strain>ATCC VR-885 / DSM 19411 / UW-3/Cx</strain>
    </source>
</reference>
<accession>O84549</accession>
<comment type="function">
    <text evidence="1">DNA polymerase III is a complex, multichain enzyme responsible for most of the replicative synthesis in bacteria. This DNA polymerase also exhibits 3' to 5' exonuclease activity. The alpha chain is the DNA polymerase (By similarity).</text>
</comment>
<comment type="catalytic activity">
    <reaction>
        <text>DNA(n) + a 2'-deoxyribonucleoside 5'-triphosphate = DNA(n+1) + diphosphate</text>
        <dbReference type="Rhea" id="RHEA:22508"/>
        <dbReference type="Rhea" id="RHEA-COMP:17339"/>
        <dbReference type="Rhea" id="RHEA-COMP:17340"/>
        <dbReference type="ChEBI" id="CHEBI:33019"/>
        <dbReference type="ChEBI" id="CHEBI:61560"/>
        <dbReference type="ChEBI" id="CHEBI:173112"/>
        <dbReference type="EC" id="2.7.7.7"/>
    </reaction>
</comment>
<comment type="subunit">
    <text evidence="1">DNA polymerase III contains a core (composed of alpha, epsilon and theta chains) that associates with a tau subunit. This core dimerizes to form the PolIII' complex. PolIII' associates with the gamma complex (composed of gamma, delta, delta', psi and chi chains) and with the beta chain to form the complete DNA polymerase III complex (By similarity).</text>
</comment>
<comment type="subcellular location">
    <subcellularLocation>
        <location evidence="1">Cytoplasm</location>
    </subcellularLocation>
</comment>
<comment type="similarity">
    <text evidence="2">Belongs to the DNA polymerase type-C family. DnaE subfamily.</text>
</comment>
<name>DPO3A_CHLTR</name>
<protein>
    <recommendedName>
        <fullName>DNA polymerase III subunit alpha</fullName>
        <ecNumber>2.7.7.7</ecNumber>
    </recommendedName>
</protein>
<feature type="chain" id="PRO_0000103319" description="DNA polymerase III subunit alpha">
    <location>
        <begin position="1"/>
        <end position="1237"/>
    </location>
</feature>
<dbReference type="EC" id="2.7.7.7"/>
<dbReference type="EMBL" id="AE001273">
    <property type="protein sequence ID" value="AAC68147.1"/>
    <property type="molecule type" value="Genomic_DNA"/>
</dbReference>
<dbReference type="PIR" id="B71501">
    <property type="entry name" value="B71501"/>
</dbReference>
<dbReference type="RefSeq" id="NP_220060.1">
    <property type="nucleotide sequence ID" value="NC_000117.1"/>
</dbReference>
<dbReference type="RefSeq" id="WP_010725247.1">
    <property type="nucleotide sequence ID" value="NC_000117.1"/>
</dbReference>
<dbReference type="SMR" id="O84549"/>
<dbReference type="FunCoup" id="O84549">
    <property type="interactions" value="196"/>
</dbReference>
<dbReference type="STRING" id="272561.CT_545"/>
<dbReference type="EnsemblBacteria" id="AAC68147">
    <property type="protein sequence ID" value="AAC68147"/>
    <property type="gene ID" value="CT_545"/>
</dbReference>
<dbReference type="GeneID" id="884322"/>
<dbReference type="KEGG" id="ctr:CT_545"/>
<dbReference type="PATRIC" id="fig|272561.5.peg.592"/>
<dbReference type="HOGENOM" id="CLU_001600_0_0_0"/>
<dbReference type="InParanoid" id="O84549"/>
<dbReference type="OrthoDB" id="9803237at2"/>
<dbReference type="Proteomes" id="UP000000431">
    <property type="component" value="Chromosome"/>
</dbReference>
<dbReference type="GO" id="GO:0005737">
    <property type="term" value="C:cytoplasm"/>
    <property type="evidence" value="ECO:0007669"/>
    <property type="project" value="UniProtKB-SubCell"/>
</dbReference>
<dbReference type="GO" id="GO:0008408">
    <property type="term" value="F:3'-5' exonuclease activity"/>
    <property type="evidence" value="ECO:0007669"/>
    <property type="project" value="InterPro"/>
</dbReference>
<dbReference type="GO" id="GO:0003887">
    <property type="term" value="F:DNA-directed DNA polymerase activity"/>
    <property type="evidence" value="ECO:0000318"/>
    <property type="project" value="GO_Central"/>
</dbReference>
<dbReference type="GO" id="GO:0006260">
    <property type="term" value="P:DNA replication"/>
    <property type="evidence" value="ECO:0007669"/>
    <property type="project" value="UniProtKB-KW"/>
</dbReference>
<dbReference type="CDD" id="cd04485">
    <property type="entry name" value="DnaE_OBF"/>
    <property type="match status" value="1"/>
</dbReference>
<dbReference type="CDD" id="cd12113">
    <property type="entry name" value="PHP_PolIIIA_DnaE3"/>
    <property type="match status" value="1"/>
</dbReference>
<dbReference type="Gene3D" id="1.10.150.870">
    <property type="match status" value="1"/>
</dbReference>
<dbReference type="Gene3D" id="1.10.10.1600">
    <property type="entry name" value="Bacterial DNA polymerase III alpha subunit, thumb domain"/>
    <property type="match status" value="1"/>
</dbReference>
<dbReference type="Gene3D" id="3.20.20.140">
    <property type="entry name" value="Metal-dependent hydrolases"/>
    <property type="match status" value="1"/>
</dbReference>
<dbReference type="InterPro" id="IPR011708">
    <property type="entry name" value="DNA_pol3_alpha_NTPase_dom"/>
</dbReference>
<dbReference type="InterPro" id="IPR041931">
    <property type="entry name" value="DNA_pol3_alpha_thumb_dom"/>
</dbReference>
<dbReference type="InterPro" id="IPR040982">
    <property type="entry name" value="DNA_pol3_finger"/>
</dbReference>
<dbReference type="InterPro" id="IPR004805">
    <property type="entry name" value="DnaE2/DnaE/PolC"/>
</dbReference>
<dbReference type="InterPro" id="IPR029460">
    <property type="entry name" value="DNAPol_HHH"/>
</dbReference>
<dbReference type="InterPro" id="IPR004013">
    <property type="entry name" value="PHP_dom"/>
</dbReference>
<dbReference type="InterPro" id="IPR003141">
    <property type="entry name" value="Pol/His_phosphatase_N"/>
</dbReference>
<dbReference type="InterPro" id="IPR016195">
    <property type="entry name" value="Pol/histidinol_Pase-like"/>
</dbReference>
<dbReference type="InterPro" id="IPR010994">
    <property type="entry name" value="RuvA_2-like"/>
</dbReference>
<dbReference type="NCBIfam" id="TIGR00594">
    <property type="entry name" value="polc"/>
    <property type="match status" value="1"/>
</dbReference>
<dbReference type="NCBIfam" id="NF004226">
    <property type="entry name" value="PRK05673.1"/>
    <property type="match status" value="1"/>
</dbReference>
<dbReference type="PANTHER" id="PTHR32294">
    <property type="entry name" value="DNA POLYMERASE III SUBUNIT ALPHA"/>
    <property type="match status" value="1"/>
</dbReference>
<dbReference type="PANTHER" id="PTHR32294:SF0">
    <property type="entry name" value="DNA POLYMERASE III SUBUNIT ALPHA"/>
    <property type="match status" value="1"/>
</dbReference>
<dbReference type="Pfam" id="PF07733">
    <property type="entry name" value="DNA_pol3_alpha"/>
    <property type="match status" value="1"/>
</dbReference>
<dbReference type="Pfam" id="PF17657">
    <property type="entry name" value="DNA_pol3_finger"/>
    <property type="match status" value="1"/>
</dbReference>
<dbReference type="Pfam" id="PF14579">
    <property type="entry name" value="HHH_6"/>
    <property type="match status" value="1"/>
</dbReference>
<dbReference type="Pfam" id="PF02811">
    <property type="entry name" value="PHP"/>
    <property type="match status" value="1"/>
</dbReference>
<dbReference type="SMART" id="SM00481">
    <property type="entry name" value="POLIIIAc"/>
    <property type="match status" value="1"/>
</dbReference>
<dbReference type="SUPFAM" id="SSF89550">
    <property type="entry name" value="PHP domain-like"/>
    <property type="match status" value="1"/>
</dbReference>
<dbReference type="SUPFAM" id="SSF47781">
    <property type="entry name" value="RuvA domain 2-like"/>
    <property type="match status" value="1"/>
</dbReference>
<organism>
    <name type="scientific">Chlamydia trachomatis serovar D (strain ATCC VR-885 / DSM 19411 / UW-3/Cx)</name>
    <dbReference type="NCBI Taxonomy" id="272561"/>
    <lineage>
        <taxon>Bacteria</taxon>
        <taxon>Pseudomonadati</taxon>
        <taxon>Chlamydiota</taxon>
        <taxon>Chlamydiia</taxon>
        <taxon>Chlamydiales</taxon>
        <taxon>Chlamydiaceae</taxon>
        <taxon>Chlamydia/Chlamydophila group</taxon>
        <taxon>Chlamydia</taxon>
    </lineage>
</organism>
<gene>
    <name type="primary">dnaE</name>
    <name type="ordered locus">CT_545</name>
</gene>
<evidence type="ECO:0000250" key="1"/>
<evidence type="ECO:0000305" key="2"/>
<keyword id="KW-0963">Cytoplasm</keyword>
<keyword id="KW-0235">DNA replication</keyword>
<keyword id="KW-0239">DNA-directed DNA polymerase</keyword>
<keyword id="KW-0548">Nucleotidyltransferase</keyword>
<keyword id="KW-1185">Reference proteome</keyword>
<keyword id="KW-0808">Transferase</keyword>